<dbReference type="EC" id="1.4.1.21" evidence="1"/>
<dbReference type="EMBL" id="CP000085">
    <property type="protein sequence ID" value="ABC35596.1"/>
    <property type="molecule type" value="Genomic_DNA"/>
</dbReference>
<dbReference type="RefSeq" id="WP_009897315.1">
    <property type="nucleotide sequence ID" value="NZ_CP008786.1"/>
</dbReference>
<dbReference type="SMR" id="Q2T559"/>
<dbReference type="GeneID" id="45118939"/>
<dbReference type="KEGG" id="bte:BTH_II1494"/>
<dbReference type="HOGENOM" id="CLU_089550_0_0_4"/>
<dbReference type="UniPathway" id="UPA00253">
    <property type="reaction ID" value="UER00456"/>
</dbReference>
<dbReference type="Proteomes" id="UP000001930">
    <property type="component" value="Chromosome II"/>
</dbReference>
<dbReference type="GO" id="GO:0033735">
    <property type="term" value="F:aspartate dehydrogenase activity"/>
    <property type="evidence" value="ECO:0007669"/>
    <property type="project" value="UniProtKB-EC"/>
</dbReference>
<dbReference type="GO" id="GO:0051287">
    <property type="term" value="F:NAD binding"/>
    <property type="evidence" value="ECO:0007669"/>
    <property type="project" value="UniProtKB-UniRule"/>
</dbReference>
<dbReference type="GO" id="GO:0050661">
    <property type="term" value="F:NADP binding"/>
    <property type="evidence" value="ECO:0007669"/>
    <property type="project" value="UniProtKB-UniRule"/>
</dbReference>
<dbReference type="GO" id="GO:0016639">
    <property type="term" value="F:oxidoreductase activity, acting on the CH-NH2 group of donors, NAD or NADP as acceptor"/>
    <property type="evidence" value="ECO:0007669"/>
    <property type="project" value="UniProtKB-UniRule"/>
</dbReference>
<dbReference type="GO" id="GO:0009435">
    <property type="term" value="P:NAD biosynthetic process"/>
    <property type="evidence" value="ECO:0007669"/>
    <property type="project" value="UniProtKB-UniRule"/>
</dbReference>
<dbReference type="Gene3D" id="3.30.360.10">
    <property type="entry name" value="Dihydrodipicolinate Reductase, domain 2"/>
    <property type="match status" value="1"/>
</dbReference>
<dbReference type="Gene3D" id="3.40.50.720">
    <property type="entry name" value="NAD(P)-binding Rossmann-like Domain"/>
    <property type="match status" value="1"/>
</dbReference>
<dbReference type="HAMAP" id="MF_01265">
    <property type="entry name" value="NadX"/>
    <property type="match status" value="1"/>
</dbReference>
<dbReference type="InterPro" id="IPR005106">
    <property type="entry name" value="Asp/hSer_DH_NAD-bd"/>
</dbReference>
<dbReference type="InterPro" id="IPR002811">
    <property type="entry name" value="Asp_DH"/>
</dbReference>
<dbReference type="InterPro" id="IPR020626">
    <property type="entry name" value="Asp_DH_prok"/>
</dbReference>
<dbReference type="InterPro" id="IPR011182">
    <property type="entry name" value="L-Asp_DH"/>
</dbReference>
<dbReference type="InterPro" id="IPR036291">
    <property type="entry name" value="NAD(P)-bd_dom_sf"/>
</dbReference>
<dbReference type="NCBIfam" id="NF009826">
    <property type="entry name" value="PRK13303.1-1"/>
    <property type="match status" value="1"/>
</dbReference>
<dbReference type="NCBIfam" id="NF009827">
    <property type="entry name" value="PRK13303.1-2"/>
    <property type="match status" value="1"/>
</dbReference>
<dbReference type="NCBIfam" id="NF009828">
    <property type="entry name" value="PRK13303.1-3"/>
    <property type="match status" value="1"/>
</dbReference>
<dbReference type="PANTHER" id="PTHR31873:SF6">
    <property type="entry name" value="ASPARTATE DEHYDROGENASE DOMAIN-CONTAINING PROTEIN"/>
    <property type="match status" value="1"/>
</dbReference>
<dbReference type="PANTHER" id="PTHR31873">
    <property type="entry name" value="L-ASPARTATE DEHYDROGENASE-RELATED"/>
    <property type="match status" value="1"/>
</dbReference>
<dbReference type="Pfam" id="PF01958">
    <property type="entry name" value="Asp_DH_C"/>
    <property type="match status" value="1"/>
</dbReference>
<dbReference type="Pfam" id="PF03447">
    <property type="entry name" value="NAD_binding_3"/>
    <property type="match status" value="1"/>
</dbReference>
<dbReference type="PIRSF" id="PIRSF005227">
    <property type="entry name" value="Asp_dh_NAD_syn"/>
    <property type="match status" value="1"/>
</dbReference>
<dbReference type="SUPFAM" id="SSF55347">
    <property type="entry name" value="Glyceraldehyde-3-phosphate dehydrogenase-like, C-terminal domain"/>
    <property type="match status" value="1"/>
</dbReference>
<dbReference type="SUPFAM" id="SSF51735">
    <property type="entry name" value="NAD(P)-binding Rossmann-fold domains"/>
    <property type="match status" value="1"/>
</dbReference>
<reference key="1">
    <citation type="journal article" date="2005" name="BMC Genomics">
        <title>Bacterial genome adaptation to niches: divergence of the potential virulence genes in three Burkholderia species of different survival strategies.</title>
        <authorList>
            <person name="Kim H.S."/>
            <person name="Schell M.A."/>
            <person name="Yu Y."/>
            <person name="Ulrich R.L."/>
            <person name="Sarria S.H."/>
            <person name="Nierman W.C."/>
            <person name="DeShazer D."/>
        </authorList>
    </citation>
    <scope>NUCLEOTIDE SEQUENCE [LARGE SCALE GENOMIC DNA]</scope>
    <source>
        <strain>ATCC 700388 / DSM 13276 / CCUG 48851 / CIP 106301 / E264</strain>
    </source>
</reference>
<accession>Q2T559</accession>
<protein>
    <recommendedName>
        <fullName evidence="1">L-aspartate dehydrogenase</fullName>
        <ecNumber evidence="1">1.4.1.21</ecNumber>
    </recommendedName>
</protein>
<evidence type="ECO:0000255" key="1">
    <source>
        <dbReference type="HAMAP-Rule" id="MF_01265"/>
    </source>
</evidence>
<proteinExistence type="inferred from homology"/>
<comment type="function">
    <text evidence="1">Specifically catalyzes the NAD or NADP-dependent dehydrogenation of L-aspartate to iminoaspartate.</text>
</comment>
<comment type="catalytic activity">
    <reaction evidence="1">
        <text>L-aspartate + NADP(+) + H2O = oxaloacetate + NH4(+) + NADPH + H(+)</text>
        <dbReference type="Rhea" id="RHEA:11784"/>
        <dbReference type="ChEBI" id="CHEBI:15377"/>
        <dbReference type="ChEBI" id="CHEBI:15378"/>
        <dbReference type="ChEBI" id="CHEBI:16452"/>
        <dbReference type="ChEBI" id="CHEBI:28938"/>
        <dbReference type="ChEBI" id="CHEBI:29991"/>
        <dbReference type="ChEBI" id="CHEBI:57783"/>
        <dbReference type="ChEBI" id="CHEBI:58349"/>
        <dbReference type="EC" id="1.4.1.21"/>
    </reaction>
</comment>
<comment type="catalytic activity">
    <reaction evidence="1">
        <text>L-aspartate + NAD(+) + H2O = oxaloacetate + NH4(+) + NADH + H(+)</text>
        <dbReference type="Rhea" id="RHEA:11788"/>
        <dbReference type="ChEBI" id="CHEBI:15377"/>
        <dbReference type="ChEBI" id="CHEBI:15378"/>
        <dbReference type="ChEBI" id="CHEBI:16452"/>
        <dbReference type="ChEBI" id="CHEBI:28938"/>
        <dbReference type="ChEBI" id="CHEBI:29991"/>
        <dbReference type="ChEBI" id="CHEBI:57540"/>
        <dbReference type="ChEBI" id="CHEBI:57945"/>
        <dbReference type="EC" id="1.4.1.21"/>
    </reaction>
</comment>
<comment type="pathway">
    <text evidence="1">Cofactor biosynthesis; NAD(+) biosynthesis; iminoaspartate from L-aspartate (dehydrogenase route): step 1/1.</text>
</comment>
<comment type="miscellaneous">
    <text evidence="1">The iminoaspartate product is unstable in aqueous solution and can decompose to oxaloacetate and ammonia.</text>
</comment>
<comment type="similarity">
    <text evidence="1">Belongs to the L-aspartate dehydrogenase family.</text>
</comment>
<feature type="chain" id="PRO_1000067301" description="L-aspartate dehydrogenase">
    <location>
        <begin position="1"/>
        <end position="271"/>
    </location>
</feature>
<feature type="active site" evidence="1">
    <location>
        <position position="224"/>
    </location>
</feature>
<feature type="binding site" evidence="1">
    <location>
        <position position="128"/>
    </location>
    <ligand>
        <name>NAD(+)</name>
        <dbReference type="ChEBI" id="CHEBI:57540"/>
    </ligand>
</feature>
<feature type="binding site" evidence="1">
    <location>
        <position position="194"/>
    </location>
    <ligand>
        <name>NAD(+)</name>
        <dbReference type="ChEBI" id="CHEBI:57540"/>
    </ligand>
</feature>
<gene>
    <name evidence="1" type="primary">nadX</name>
    <name type="ordered locus">BTH_II1494</name>
</gene>
<organism>
    <name type="scientific">Burkholderia thailandensis (strain ATCC 700388 / DSM 13276 / CCUG 48851 / CIP 106301 / E264)</name>
    <dbReference type="NCBI Taxonomy" id="271848"/>
    <lineage>
        <taxon>Bacteria</taxon>
        <taxon>Pseudomonadati</taxon>
        <taxon>Pseudomonadota</taxon>
        <taxon>Betaproteobacteria</taxon>
        <taxon>Burkholderiales</taxon>
        <taxon>Burkholderiaceae</taxon>
        <taxon>Burkholderia</taxon>
        <taxon>pseudomallei group</taxon>
    </lineage>
</organism>
<keyword id="KW-0520">NAD</keyword>
<keyword id="KW-0521">NADP</keyword>
<keyword id="KW-0560">Oxidoreductase</keyword>
<keyword id="KW-0662">Pyridine nucleotide biosynthesis</keyword>
<sequence length="271" mass="27879">MRNAHAPVDVAMIGFGAIGAAVYRAVEHDAALRVAHVIVPEHQCDAVRGALGERVDVVSSVDALAYRPQFALECAGHGALVDHVVPLLRAGTDCAVASIGALSDLALLDALSEAADEGGATLTLLSGAIGGVDALAAAKQGGLDEVQYIGRKPPLGWLGTPAEALCDLRAMTAEQTIFEGSARDAARLYPKNANVAATVALAGVGLDATKVRLIADPAVTRNVHRVVARGAFGEMSIEMSGKPLPDNPKTSALTAFSAIRALRNRASHCVI</sequence>
<name>ASPD_BURTA</name>